<keyword id="KW-1185">Reference proteome</keyword>
<keyword id="KW-0687">Ribonucleoprotein</keyword>
<keyword id="KW-0689">Ribosomal protein</keyword>
<keyword id="KW-0694">RNA-binding</keyword>
<keyword id="KW-0699">rRNA-binding</keyword>
<feature type="chain" id="PRO_0000237254" description="Large ribosomal subunit protein uL2">
    <location>
        <begin position="1"/>
        <end position="294"/>
    </location>
</feature>
<feature type="region of interest" description="Disordered" evidence="2">
    <location>
        <begin position="1"/>
        <end position="37"/>
    </location>
</feature>
<feature type="region of interest" description="Disordered" evidence="2">
    <location>
        <begin position="228"/>
        <end position="294"/>
    </location>
</feature>
<feature type="compositionally biased region" description="Basic and acidic residues" evidence="2">
    <location>
        <begin position="23"/>
        <end position="37"/>
    </location>
</feature>
<feature type="compositionally biased region" description="Basic residues" evidence="2">
    <location>
        <begin position="264"/>
        <end position="285"/>
    </location>
</feature>
<proteinExistence type="inferred from homology"/>
<dbReference type="EMBL" id="CP000240">
    <property type="protein sequence ID" value="ABD03530.1"/>
    <property type="molecule type" value="Genomic_DNA"/>
</dbReference>
<dbReference type="RefSeq" id="WP_011434155.1">
    <property type="nucleotide sequence ID" value="NC_007776.1"/>
</dbReference>
<dbReference type="SMR" id="Q2JIM4"/>
<dbReference type="STRING" id="321332.CYB_2600"/>
<dbReference type="KEGG" id="cyb:CYB_2600"/>
<dbReference type="eggNOG" id="COG0090">
    <property type="taxonomic scope" value="Bacteria"/>
</dbReference>
<dbReference type="HOGENOM" id="CLU_036235_2_1_3"/>
<dbReference type="OrthoDB" id="9778722at2"/>
<dbReference type="Proteomes" id="UP000001938">
    <property type="component" value="Chromosome"/>
</dbReference>
<dbReference type="GO" id="GO:0015934">
    <property type="term" value="C:large ribosomal subunit"/>
    <property type="evidence" value="ECO:0007669"/>
    <property type="project" value="InterPro"/>
</dbReference>
<dbReference type="GO" id="GO:0019843">
    <property type="term" value="F:rRNA binding"/>
    <property type="evidence" value="ECO:0007669"/>
    <property type="project" value="UniProtKB-UniRule"/>
</dbReference>
<dbReference type="GO" id="GO:0003735">
    <property type="term" value="F:structural constituent of ribosome"/>
    <property type="evidence" value="ECO:0007669"/>
    <property type="project" value="InterPro"/>
</dbReference>
<dbReference type="GO" id="GO:0016740">
    <property type="term" value="F:transferase activity"/>
    <property type="evidence" value="ECO:0007669"/>
    <property type="project" value="InterPro"/>
</dbReference>
<dbReference type="GO" id="GO:0006412">
    <property type="term" value="P:translation"/>
    <property type="evidence" value="ECO:0007669"/>
    <property type="project" value="UniProtKB-UniRule"/>
</dbReference>
<dbReference type="FunFam" id="2.30.30.30:FF:000001">
    <property type="entry name" value="50S ribosomal protein L2"/>
    <property type="match status" value="1"/>
</dbReference>
<dbReference type="FunFam" id="2.40.50.140:FF:000003">
    <property type="entry name" value="50S ribosomal protein L2"/>
    <property type="match status" value="1"/>
</dbReference>
<dbReference type="FunFam" id="4.10.950.10:FF:000001">
    <property type="entry name" value="50S ribosomal protein L2"/>
    <property type="match status" value="1"/>
</dbReference>
<dbReference type="Gene3D" id="2.30.30.30">
    <property type="match status" value="1"/>
</dbReference>
<dbReference type="Gene3D" id="2.40.50.140">
    <property type="entry name" value="Nucleic acid-binding proteins"/>
    <property type="match status" value="1"/>
</dbReference>
<dbReference type="Gene3D" id="4.10.950.10">
    <property type="entry name" value="Ribosomal protein L2, domain 3"/>
    <property type="match status" value="1"/>
</dbReference>
<dbReference type="HAMAP" id="MF_01320_B">
    <property type="entry name" value="Ribosomal_uL2_B"/>
    <property type="match status" value="1"/>
</dbReference>
<dbReference type="InterPro" id="IPR012340">
    <property type="entry name" value="NA-bd_OB-fold"/>
</dbReference>
<dbReference type="InterPro" id="IPR014722">
    <property type="entry name" value="Rib_uL2_dom2"/>
</dbReference>
<dbReference type="InterPro" id="IPR002171">
    <property type="entry name" value="Ribosomal_uL2"/>
</dbReference>
<dbReference type="InterPro" id="IPR005880">
    <property type="entry name" value="Ribosomal_uL2_bac/org-type"/>
</dbReference>
<dbReference type="InterPro" id="IPR022669">
    <property type="entry name" value="Ribosomal_uL2_C"/>
</dbReference>
<dbReference type="InterPro" id="IPR022671">
    <property type="entry name" value="Ribosomal_uL2_CS"/>
</dbReference>
<dbReference type="InterPro" id="IPR014726">
    <property type="entry name" value="Ribosomal_uL2_dom3"/>
</dbReference>
<dbReference type="InterPro" id="IPR022666">
    <property type="entry name" value="Ribosomal_uL2_RNA-bd_dom"/>
</dbReference>
<dbReference type="InterPro" id="IPR008991">
    <property type="entry name" value="Translation_prot_SH3-like_sf"/>
</dbReference>
<dbReference type="NCBIfam" id="TIGR01171">
    <property type="entry name" value="rplB_bact"/>
    <property type="match status" value="1"/>
</dbReference>
<dbReference type="PANTHER" id="PTHR13691:SF5">
    <property type="entry name" value="LARGE RIBOSOMAL SUBUNIT PROTEIN UL2M"/>
    <property type="match status" value="1"/>
</dbReference>
<dbReference type="PANTHER" id="PTHR13691">
    <property type="entry name" value="RIBOSOMAL PROTEIN L2"/>
    <property type="match status" value="1"/>
</dbReference>
<dbReference type="Pfam" id="PF00181">
    <property type="entry name" value="Ribosomal_L2"/>
    <property type="match status" value="1"/>
</dbReference>
<dbReference type="Pfam" id="PF03947">
    <property type="entry name" value="Ribosomal_L2_C"/>
    <property type="match status" value="1"/>
</dbReference>
<dbReference type="PIRSF" id="PIRSF002158">
    <property type="entry name" value="Ribosomal_L2"/>
    <property type="match status" value="1"/>
</dbReference>
<dbReference type="SMART" id="SM01383">
    <property type="entry name" value="Ribosomal_L2"/>
    <property type="match status" value="1"/>
</dbReference>
<dbReference type="SMART" id="SM01382">
    <property type="entry name" value="Ribosomal_L2_C"/>
    <property type="match status" value="1"/>
</dbReference>
<dbReference type="SUPFAM" id="SSF50249">
    <property type="entry name" value="Nucleic acid-binding proteins"/>
    <property type="match status" value="1"/>
</dbReference>
<dbReference type="SUPFAM" id="SSF50104">
    <property type="entry name" value="Translation proteins SH3-like domain"/>
    <property type="match status" value="1"/>
</dbReference>
<dbReference type="PROSITE" id="PS00467">
    <property type="entry name" value="RIBOSOMAL_L2"/>
    <property type="match status" value="1"/>
</dbReference>
<evidence type="ECO:0000255" key="1">
    <source>
        <dbReference type="HAMAP-Rule" id="MF_01320"/>
    </source>
</evidence>
<evidence type="ECO:0000256" key="2">
    <source>
        <dbReference type="SAM" id="MobiDB-lite"/>
    </source>
</evidence>
<evidence type="ECO:0000305" key="3"/>
<sequence length="294" mass="32774">MGIRTLRPYTPSTRHMTVSDFEELSRDENGKRPRPEKSLLQFIHRKKGRNNRGVITCRHRGGGHKRLYRIIDFRRDKRGIPGTVKTVEYDPNRSAHICLVEYEDGEKRYILAPRNLQVGSTIMAGPEAPFEIGNAMPLERIPLGTVVHNVELYPGRGGQMVRAAGAGAQVVAREGKYVSLKLPSGEVRMIRGECYATIGQLGNVDHNNISLGKAGRSRWLGRRPKVRGSVMNPVDHPHGGGEGRAPIGRSTPVTPWGKPTLGYKTRKRNKPSNKFIVRGRRRGGRRDKGGRAAQ</sequence>
<protein>
    <recommendedName>
        <fullName evidence="1">Large ribosomal subunit protein uL2</fullName>
    </recommendedName>
    <alternativeName>
        <fullName evidence="3">50S ribosomal protein L2</fullName>
    </alternativeName>
</protein>
<accession>Q2JIM4</accession>
<reference key="1">
    <citation type="journal article" date="2007" name="ISME J.">
        <title>Population level functional diversity in a microbial community revealed by comparative genomic and metagenomic analyses.</title>
        <authorList>
            <person name="Bhaya D."/>
            <person name="Grossman A.R."/>
            <person name="Steunou A.-S."/>
            <person name="Khuri N."/>
            <person name="Cohan F.M."/>
            <person name="Hamamura N."/>
            <person name="Melendrez M.C."/>
            <person name="Bateson M.M."/>
            <person name="Ward D.M."/>
            <person name="Heidelberg J.F."/>
        </authorList>
    </citation>
    <scope>NUCLEOTIDE SEQUENCE [LARGE SCALE GENOMIC DNA]</scope>
    <source>
        <strain>JA-2-3B'a(2-13)</strain>
    </source>
</reference>
<organism>
    <name type="scientific">Synechococcus sp. (strain JA-2-3B'a(2-13))</name>
    <name type="common">Cyanobacteria bacterium Yellowstone B-Prime</name>
    <dbReference type="NCBI Taxonomy" id="321332"/>
    <lineage>
        <taxon>Bacteria</taxon>
        <taxon>Bacillati</taxon>
        <taxon>Cyanobacteriota</taxon>
        <taxon>Cyanophyceae</taxon>
        <taxon>Synechococcales</taxon>
        <taxon>Synechococcaceae</taxon>
        <taxon>Synechococcus</taxon>
    </lineage>
</organism>
<comment type="function">
    <text evidence="1">One of the primary rRNA binding proteins. Required for association of the 30S and 50S subunits to form the 70S ribosome, for tRNA binding and peptide bond formation. It has been suggested to have peptidyltransferase activity; this is somewhat controversial. Makes several contacts with the 16S rRNA in the 70S ribosome.</text>
</comment>
<comment type="subunit">
    <text evidence="1">Part of the 50S ribosomal subunit. Forms a bridge to the 30S subunit in the 70S ribosome.</text>
</comment>
<comment type="similarity">
    <text evidence="1">Belongs to the universal ribosomal protein uL2 family.</text>
</comment>
<name>RL2_SYNJB</name>
<gene>
    <name evidence="1" type="primary">rplB</name>
    <name evidence="1" type="synonym">rpl2</name>
    <name type="ordered locus">CYB_2600</name>
</gene>